<evidence type="ECO:0000256" key="1">
    <source>
        <dbReference type="SAM" id="MobiDB-lite"/>
    </source>
</evidence>
<evidence type="ECO:0000269" key="2">
    <source>
    </source>
</evidence>
<evidence type="ECO:0000269" key="3">
    <source>
    </source>
</evidence>
<evidence type="ECO:0000269" key="4">
    <source>
    </source>
</evidence>
<evidence type="ECO:0007744" key="5">
    <source>
    </source>
</evidence>
<evidence type="ECO:0007744" key="6">
    <source>
    </source>
</evidence>
<evidence type="ECO:0007744" key="7">
    <source>
    </source>
</evidence>
<evidence type="ECO:0007829" key="8">
    <source>
        <dbReference type="PDB" id="6J0W"/>
    </source>
</evidence>
<evidence type="ECO:0007829" key="9">
    <source>
        <dbReference type="PDB" id="7LTO"/>
    </source>
</evidence>
<evidence type="ECO:0007829" key="10">
    <source>
        <dbReference type="PDB" id="8HQS"/>
    </source>
</evidence>
<organism>
    <name type="scientific">Saccharomyces cerevisiae (strain ATCC 204508 / S288c)</name>
    <name type="common">Baker's yeast</name>
    <dbReference type="NCBI Taxonomy" id="559292"/>
    <lineage>
        <taxon>Eukaryota</taxon>
        <taxon>Fungi</taxon>
        <taxon>Dikarya</taxon>
        <taxon>Ascomycota</taxon>
        <taxon>Saccharomycotina</taxon>
        <taxon>Saccharomycetes</taxon>
        <taxon>Saccharomycetales</taxon>
        <taxon>Saccharomycetaceae</taxon>
        <taxon>Saccharomyces</taxon>
    </lineage>
</organism>
<reference key="1">
    <citation type="journal article" date="1997" name="Nature">
        <title>The nucleotide sequence of Saccharomyces cerevisiae chromosome V.</title>
        <authorList>
            <person name="Dietrich F.S."/>
            <person name="Mulligan J.T."/>
            <person name="Hennessy K.M."/>
            <person name="Yelton M.A."/>
            <person name="Allen E."/>
            <person name="Araujo R."/>
            <person name="Aviles E."/>
            <person name="Berno A."/>
            <person name="Brennan T."/>
            <person name="Carpenter J."/>
            <person name="Chen E."/>
            <person name="Cherry J.M."/>
            <person name="Chung E."/>
            <person name="Duncan M."/>
            <person name="Guzman E."/>
            <person name="Hartzell G."/>
            <person name="Hunicke-Smith S."/>
            <person name="Hyman R.W."/>
            <person name="Kayser A."/>
            <person name="Komp C."/>
            <person name="Lashkari D."/>
            <person name="Lew H."/>
            <person name="Lin D."/>
            <person name="Mosedale D."/>
            <person name="Nakahara K."/>
            <person name="Namath A."/>
            <person name="Norgren R."/>
            <person name="Oefner P."/>
            <person name="Oh C."/>
            <person name="Petel F.X."/>
            <person name="Roberts D."/>
            <person name="Sehl P."/>
            <person name="Schramm S."/>
            <person name="Shogren T."/>
            <person name="Smith V."/>
            <person name="Taylor P."/>
            <person name="Wei Y."/>
            <person name="Botstein D."/>
            <person name="Davis R.W."/>
        </authorList>
    </citation>
    <scope>NUCLEOTIDE SEQUENCE [LARGE SCALE GENOMIC DNA]</scope>
    <source>
        <strain>ATCC 204508 / S288c</strain>
    </source>
</reference>
<reference key="2">
    <citation type="journal article" date="2014" name="G3 (Bethesda)">
        <title>The reference genome sequence of Saccharomyces cerevisiae: Then and now.</title>
        <authorList>
            <person name="Engel S.R."/>
            <person name="Dietrich F.S."/>
            <person name="Fisk D.G."/>
            <person name="Binkley G."/>
            <person name="Balakrishnan R."/>
            <person name="Costanzo M.C."/>
            <person name="Dwight S.S."/>
            <person name="Hitz B.C."/>
            <person name="Karra K."/>
            <person name="Nash R.S."/>
            <person name="Weng S."/>
            <person name="Wong E.D."/>
            <person name="Lloyd P."/>
            <person name="Skrzypek M.S."/>
            <person name="Miyasato S.R."/>
            <person name="Simison M."/>
            <person name="Cherry J.M."/>
        </authorList>
    </citation>
    <scope>GENOME REANNOTATION</scope>
    <source>
        <strain>ATCC 204508 / S288c</strain>
    </source>
</reference>
<reference key="3">
    <citation type="journal article" date="2003" name="Mol. Cell">
        <title>Assigning function to yeast proteins by integration of technologies.</title>
        <authorList>
            <person name="Hazbun T.R."/>
            <person name="Malmstroem L."/>
            <person name="Anderson S."/>
            <person name="Graczyk B.J."/>
            <person name="Fox B."/>
            <person name="Riffle M."/>
            <person name="Sundin B.A."/>
            <person name="Aranda J.D."/>
            <person name="McDonald W.H."/>
            <person name="Chiu C.-H."/>
            <person name="Snydsman B.E."/>
            <person name="Bradley P."/>
            <person name="Muller E.G.D."/>
            <person name="Fields S."/>
            <person name="Baker D."/>
            <person name="Yates J.R. III"/>
            <person name="Davis T.N."/>
        </authorList>
    </citation>
    <scope>IDENTIFICATION BY MASS SPECTROMETRY</scope>
    <scope>INTERACTION WITH NSE5</scope>
</reference>
<reference key="4">
    <citation type="journal article" date="2003" name="Nature">
        <title>Global analysis of protein localization in budding yeast.</title>
        <authorList>
            <person name="Huh W.-K."/>
            <person name="Falvo J.V."/>
            <person name="Gerke L.C."/>
            <person name="Carroll A.S."/>
            <person name="Howson R.W."/>
            <person name="Weissman J.S."/>
            <person name="O'Shea E.K."/>
        </authorList>
    </citation>
    <scope>SUBCELLULAR LOCATION [LARGE SCALE ANALYSIS]</scope>
</reference>
<reference key="5">
    <citation type="journal article" date="2005" name="Proc. Natl. Acad. Sci. U.S.A.">
        <title>A SUMO ligase is part of a nuclear multiprotein complex that affects DNA repair and chromosomal organization.</title>
        <authorList>
            <person name="Zhao X."/>
            <person name="Blobel G."/>
        </authorList>
    </citation>
    <scope>SUBUNIT</scope>
</reference>
<reference key="6">
    <citation type="journal article" date="2007" name="J. Proteome Res.">
        <title>Large-scale phosphorylation analysis of alpha-factor-arrested Saccharomyces cerevisiae.</title>
        <authorList>
            <person name="Li X."/>
            <person name="Gerber S.A."/>
            <person name="Rudner A.D."/>
            <person name="Beausoleil S.A."/>
            <person name="Haas W."/>
            <person name="Villen J."/>
            <person name="Elias J.E."/>
            <person name="Gygi S.P."/>
        </authorList>
    </citation>
    <scope>PHOSPHORYLATION [LARGE SCALE ANALYSIS] AT SER-81</scope>
    <scope>IDENTIFICATION BY MASS SPECTROMETRY [LARGE SCALE ANALYSIS]</scope>
    <source>
        <strain>ADR376</strain>
    </source>
</reference>
<reference key="7">
    <citation type="journal article" date="2008" name="Mol. Cell. Proteomics">
        <title>A multidimensional chromatography technology for in-depth phosphoproteome analysis.</title>
        <authorList>
            <person name="Albuquerque C.P."/>
            <person name="Smolka M.B."/>
            <person name="Payne S.H."/>
            <person name="Bafna V."/>
            <person name="Eng J."/>
            <person name="Zhou H."/>
        </authorList>
    </citation>
    <scope>PHOSPHORYLATION [LARGE SCALE ANALYSIS] AT SER-81 AND SER-101</scope>
    <scope>IDENTIFICATION BY MASS SPECTROMETRY [LARGE SCALE ANALYSIS]</scope>
</reference>
<reference key="8">
    <citation type="journal article" date="2009" name="Science">
        <title>Global analysis of Cdk1 substrate phosphorylation sites provides insights into evolution.</title>
        <authorList>
            <person name="Holt L.J."/>
            <person name="Tuch B.B."/>
            <person name="Villen J."/>
            <person name="Johnson A.D."/>
            <person name="Gygi S.P."/>
            <person name="Morgan D.O."/>
        </authorList>
    </citation>
    <scope>PHOSPHORYLATION [LARGE SCALE ANALYSIS] AT SER-81</scope>
    <scope>IDENTIFICATION BY MASS SPECTROMETRY [LARGE SCALE ANALYSIS]</scope>
</reference>
<dbReference type="EMBL" id="U18796">
    <property type="protein sequence ID" value="AAB64573.1"/>
    <property type="molecule type" value="Genomic_DNA"/>
</dbReference>
<dbReference type="EMBL" id="BK006939">
    <property type="protein sequence ID" value="DAA07691.1"/>
    <property type="molecule type" value="Genomic_DNA"/>
</dbReference>
<dbReference type="PIR" id="S50541">
    <property type="entry name" value="S50541"/>
</dbReference>
<dbReference type="RefSeq" id="NP_010955.3">
    <property type="nucleotide sequence ID" value="NM_001178929.3"/>
</dbReference>
<dbReference type="PDB" id="6J0W">
    <property type="method" value="X-ray"/>
    <property type="resolution" value="2.40 A"/>
    <property type="chains" value="C/D=13-41"/>
</dbReference>
<dbReference type="PDB" id="7LTO">
    <property type="method" value="EM"/>
    <property type="resolution" value="3.20 A"/>
    <property type="chains" value="B=1-464"/>
</dbReference>
<dbReference type="PDB" id="7OGG">
    <property type="method" value="X-ray"/>
    <property type="resolution" value="3.29 A"/>
    <property type="chains" value="Q=177-464"/>
</dbReference>
<dbReference type="PDB" id="7SDE">
    <property type="method" value="EM"/>
    <property type="resolution" value="3.20 A"/>
    <property type="chains" value="B=1-464"/>
</dbReference>
<dbReference type="PDB" id="7YQH">
    <property type="method" value="EM"/>
    <property type="resolution" value="5.60 A"/>
    <property type="chains" value="D=1-464"/>
</dbReference>
<dbReference type="PDB" id="8HQS">
    <property type="method" value="EM"/>
    <property type="resolution" value="3.20 A"/>
    <property type="chains" value="D=1-464"/>
</dbReference>
<dbReference type="PDB" id="8I4V">
    <property type="method" value="EM"/>
    <property type="resolution" value="5.97 A"/>
    <property type="chains" value="D=87-150"/>
</dbReference>
<dbReference type="PDB" id="8I4W">
    <property type="method" value="EM"/>
    <property type="resolution" value="6.01 A"/>
    <property type="chains" value="D=1-464"/>
</dbReference>
<dbReference type="PDB" id="8I4X">
    <property type="method" value="EM"/>
    <property type="resolution" value="8.50 A"/>
    <property type="chains" value="D=87-464"/>
</dbReference>
<dbReference type="PDB" id="8T8E">
    <property type="method" value="EM"/>
    <property type="resolution" value="3.30 A"/>
    <property type="chains" value="B=1-464"/>
</dbReference>
<dbReference type="PDB" id="8T8F">
    <property type="method" value="EM"/>
    <property type="resolution" value="4.80 A"/>
    <property type="chains" value="B=1-464"/>
</dbReference>
<dbReference type="PDB" id="8WJO">
    <property type="method" value="EM"/>
    <property type="resolution" value="6.04 A"/>
    <property type="chains" value="D=1-464"/>
</dbReference>
<dbReference type="PDBsum" id="6J0W"/>
<dbReference type="PDBsum" id="7LTO"/>
<dbReference type="PDBsum" id="7OGG"/>
<dbReference type="PDBsum" id="7SDE"/>
<dbReference type="PDBsum" id="7YQH"/>
<dbReference type="PDBsum" id="8HQS"/>
<dbReference type="PDBsum" id="8I4V"/>
<dbReference type="PDBsum" id="8I4W"/>
<dbReference type="PDBsum" id="8I4X"/>
<dbReference type="PDBsum" id="8T8E"/>
<dbReference type="PDBsum" id="8T8F"/>
<dbReference type="PDBsum" id="8WJO"/>
<dbReference type="EMDB" id="EMD-23517"/>
<dbReference type="EMDB" id="EMD-34025"/>
<dbReference type="EMDB" id="EMD-34953"/>
<dbReference type="EMDB" id="EMD-35185"/>
<dbReference type="EMDB" id="EMD-35186"/>
<dbReference type="EMDB" id="EMD-35187"/>
<dbReference type="EMDB" id="EMD-37587"/>
<dbReference type="EMDB" id="EMD-41097"/>
<dbReference type="EMDB" id="EMD-41098"/>
<dbReference type="SMR" id="P40026"/>
<dbReference type="BioGRID" id="36773">
    <property type="interactions" value="166"/>
</dbReference>
<dbReference type="ComplexPortal" id="CPX-1364">
    <property type="entry name" value="SMC5-SMC6 SUMO ligase complex"/>
</dbReference>
<dbReference type="DIP" id="DIP-5183N"/>
<dbReference type="FunCoup" id="P40026">
    <property type="interactions" value="53"/>
</dbReference>
<dbReference type="IntAct" id="P40026">
    <property type="interactions" value="8"/>
</dbReference>
<dbReference type="STRING" id="4932.YER038C"/>
<dbReference type="iPTMnet" id="P40026"/>
<dbReference type="PaxDb" id="4932-YER038C"/>
<dbReference type="PeptideAtlas" id="P40026"/>
<dbReference type="EnsemblFungi" id="YER038C_mRNA">
    <property type="protein sequence ID" value="YER038C"/>
    <property type="gene ID" value="YER038C"/>
</dbReference>
<dbReference type="GeneID" id="856760"/>
<dbReference type="KEGG" id="sce:YER038C"/>
<dbReference type="AGR" id="SGD:S000000840"/>
<dbReference type="SGD" id="S000000840">
    <property type="gene designation" value="KRE29"/>
</dbReference>
<dbReference type="VEuPathDB" id="FungiDB:YER038C"/>
<dbReference type="eggNOG" id="KOG4599">
    <property type="taxonomic scope" value="Eukaryota"/>
</dbReference>
<dbReference type="HOGENOM" id="CLU_051886_0_0_1"/>
<dbReference type="InParanoid" id="P40026"/>
<dbReference type="OMA" id="TEYFKDC"/>
<dbReference type="OrthoDB" id="4066051at2759"/>
<dbReference type="BioCyc" id="YEAST:G3O-30219-MONOMER"/>
<dbReference type="BioGRID-ORCS" id="856760">
    <property type="hits" value="1 hit in 10 CRISPR screens"/>
</dbReference>
<dbReference type="PRO" id="PR:P40026"/>
<dbReference type="Proteomes" id="UP000002311">
    <property type="component" value="Chromosome V"/>
</dbReference>
<dbReference type="RNAct" id="P40026">
    <property type="molecule type" value="protein"/>
</dbReference>
<dbReference type="GO" id="GO:0000781">
    <property type="term" value="C:chromosome, telomeric region"/>
    <property type="evidence" value="ECO:0000303"/>
    <property type="project" value="ComplexPortal"/>
</dbReference>
<dbReference type="GO" id="GO:0005737">
    <property type="term" value="C:cytoplasm"/>
    <property type="evidence" value="ECO:0007005"/>
    <property type="project" value="SGD"/>
</dbReference>
<dbReference type="GO" id="GO:0005634">
    <property type="term" value="C:nucleus"/>
    <property type="evidence" value="ECO:0007005"/>
    <property type="project" value="SGD"/>
</dbReference>
<dbReference type="GO" id="GO:0030915">
    <property type="term" value="C:Smc5-Smc6 complex"/>
    <property type="evidence" value="ECO:0000314"/>
    <property type="project" value="SGD"/>
</dbReference>
<dbReference type="GO" id="GO:0042030">
    <property type="term" value="F:ATPase inhibitor activity"/>
    <property type="evidence" value="ECO:0000314"/>
    <property type="project" value="SGD"/>
</dbReference>
<dbReference type="GO" id="GO:0140588">
    <property type="term" value="P:chromatin looping"/>
    <property type="evidence" value="ECO:0000303"/>
    <property type="project" value="ComplexPortal"/>
</dbReference>
<dbReference type="GO" id="GO:0006281">
    <property type="term" value="P:DNA repair"/>
    <property type="evidence" value="ECO:0000315"/>
    <property type="project" value="SGD"/>
</dbReference>
<dbReference type="GO" id="GO:0000724">
    <property type="term" value="P:double-strand break repair via homologous recombination"/>
    <property type="evidence" value="ECO:0000303"/>
    <property type="project" value="ComplexPortal"/>
</dbReference>
<dbReference type="GO" id="GO:0032204">
    <property type="term" value="P:regulation of telomere maintenance"/>
    <property type="evidence" value="ECO:0000303"/>
    <property type="project" value="ComplexPortal"/>
</dbReference>
<dbReference type="InterPro" id="IPR014803">
    <property type="entry name" value="DNA_repair_Nse5/Nse6"/>
</dbReference>
<dbReference type="Pfam" id="PF08691">
    <property type="entry name" value="Nse5"/>
    <property type="match status" value="1"/>
</dbReference>
<proteinExistence type="evidence at protein level"/>
<comment type="function">
    <text>Acts in a DNA repair pathway for removal of UV-induced DNA damage that is distinct from classical nucleotide excision repair and in repair of ionizing radiation damage. Functions in homologous recombination repair of DNA double strand breaks and in recovery of stalled replication forks.</text>
</comment>
<comment type="subunit">
    <text evidence="3 4">Component of the Smc5-Smc6 complex which consists of KRE29, MMS21, NSE1, NSE3, NSE4, NSE5, SMC5 and SMC6. Interacts with NSE5.</text>
</comment>
<comment type="interaction">
    <interactant intactId="EBI-22506">
        <id>P40026</id>
    </interactant>
    <interactant intactId="EBI-27756">
        <id>Q03718</id>
        <label>NSE5</label>
    </interactant>
    <organismsDiffer>false</organismsDiffer>
    <experiments>4</experiments>
</comment>
<comment type="subcellular location">
    <subcellularLocation>
        <location evidence="2">Nucleus</location>
    </subcellularLocation>
    <subcellularLocation>
        <location evidence="2">Cytoplasm</location>
    </subcellularLocation>
</comment>
<gene>
    <name type="primary">KRE29</name>
    <name type="ordered locus">YER038C</name>
</gene>
<sequence length="464" mass="53772">MGSVNSSPNEEFETVPDSQISGFDSPLIPTSVGSYFRDDDDDEKVHPNFISDPENDSLNSDEEFSSLENSDLNLSGAKAESGDDFDPILKRTIISKRKAPSNNEDEEIVKTPRKLVNYVPLKIFNLGDSFDDTITTTVAKLQDLKKEILDSPRSNKSIVITSNTVAKSELQKSIKFSGSIPEIYLDVVTKETISDKYKDWHFISKNCHYEQLMDLEMKDTAYSFLFGSSRSQGKVPEFVHLKCPSITNLLVLFGVNQEKCNSLKINYEKKENSRYDNLCTIFPVNKMLKFLMYFYSDDDNDDVREFFLKAFICLILDRKVFNAMESDHRLCFKVLELFNEAHFINSYFEIVDKNDFFLHYRLLQIFPHLQSALLRRRFSEKQGRTETIQQNIIKEFNEFFDCKNYKNLLYFILTMYGSKFIPFGPKCQVTEYFKDCILDISNETTNDVEISILKGILNLFSKIR</sequence>
<protein>
    <recommendedName>
        <fullName>DNA repair protein KRE29</fullName>
    </recommendedName>
    <alternativeName>
        <fullName>Killer toxin-resistance protein 29</fullName>
    </alternativeName>
</protein>
<feature type="chain" id="PRO_0000084329" description="DNA repair protein KRE29">
    <location>
        <begin position="1"/>
        <end position="464"/>
    </location>
</feature>
<feature type="region of interest" description="Disordered" evidence="1">
    <location>
        <begin position="1"/>
        <end position="69"/>
    </location>
</feature>
<feature type="compositionally biased region" description="Acidic residues" evidence="1">
    <location>
        <begin position="53"/>
        <end position="65"/>
    </location>
</feature>
<feature type="modified residue" description="Phosphoserine" evidence="5 6 7">
    <location>
        <position position="81"/>
    </location>
</feature>
<feature type="modified residue" description="Phosphoserine" evidence="6">
    <location>
        <position position="101"/>
    </location>
</feature>
<feature type="strand" evidence="8">
    <location>
        <begin position="20"/>
        <end position="22"/>
    </location>
</feature>
<feature type="strand" evidence="8">
    <location>
        <begin position="26"/>
        <end position="28"/>
    </location>
</feature>
<feature type="turn" evidence="8">
    <location>
        <begin position="30"/>
        <end position="33"/>
    </location>
</feature>
<feature type="helix" evidence="10">
    <location>
        <begin position="163"/>
        <end position="172"/>
    </location>
</feature>
<feature type="helix" evidence="10">
    <location>
        <begin position="182"/>
        <end position="189"/>
    </location>
</feature>
<feature type="helix" evidence="9">
    <location>
        <begin position="209"/>
        <end position="216"/>
    </location>
</feature>
<feature type="helix" evidence="9">
    <location>
        <begin position="220"/>
        <end position="224"/>
    </location>
</feature>
<feature type="strand" evidence="9">
    <location>
        <begin position="241"/>
        <end position="243"/>
    </location>
</feature>
<feature type="helix" evidence="9">
    <location>
        <begin position="246"/>
        <end position="252"/>
    </location>
</feature>
<feature type="helix" evidence="10">
    <location>
        <begin position="257"/>
        <end position="261"/>
    </location>
</feature>
<feature type="turn" evidence="9">
    <location>
        <begin position="267"/>
        <end position="272"/>
    </location>
</feature>
<feature type="strand" evidence="10">
    <location>
        <begin position="273"/>
        <end position="275"/>
    </location>
</feature>
<feature type="helix" evidence="9">
    <location>
        <begin position="284"/>
        <end position="291"/>
    </location>
</feature>
<feature type="strand" evidence="9">
    <location>
        <begin position="297"/>
        <end position="299"/>
    </location>
</feature>
<feature type="helix" evidence="9">
    <location>
        <begin position="301"/>
        <end position="316"/>
    </location>
</feature>
<feature type="helix" evidence="9">
    <location>
        <begin position="318"/>
        <end position="321"/>
    </location>
</feature>
<feature type="helix" evidence="9">
    <location>
        <begin position="330"/>
        <end position="335"/>
    </location>
</feature>
<feature type="helix" evidence="9">
    <location>
        <begin position="340"/>
        <end position="345"/>
    </location>
</feature>
<feature type="helix" evidence="9">
    <location>
        <begin position="355"/>
        <end position="365"/>
    </location>
</feature>
<feature type="helix" evidence="10">
    <location>
        <begin position="367"/>
        <end position="369"/>
    </location>
</feature>
<feature type="helix" evidence="9">
    <location>
        <begin position="371"/>
        <end position="377"/>
    </location>
</feature>
<feature type="turn" evidence="10">
    <location>
        <begin position="380"/>
        <end position="385"/>
    </location>
</feature>
<feature type="helix" evidence="9">
    <location>
        <begin position="389"/>
        <end position="396"/>
    </location>
</feature>
<feature type="turn" evidence="9">
    <location>
        <begin position="397"/>
        <end position="403"/>
    </location>
</feature>
<feature type="helix" evidence="9">
    <location>
        <begin position="405"/>
        <end position="415"/>
    </location>
</feature>
<feature type="strand" evidence="9">
    <location>
        <begin position="418"/>
        <end position="421"/>
    </location>
</feature>
<feature type="strand" evidence="10">
    <location>
        <begin position="424"/>
        <end position="426"/>
    </location>
</feature>
<feature type="helix" evidence="9">
    <location>
        <begin position="433"/>
        <end position="440"/>
    </location>
</feature>
<feature type="strand" evidence="10">
    <location>
        <begin position="443"/>
        <end position="445"/>
    </location>
</feature>
<feature type="helix" evidence="9">
    <location>
        <begin position="449"/>
        <end position="461"/>
    </location>
</feature>
<keyword id="KW-0002">3D-structure</keyword>
<keyword id="KW-0963">Cytoplasm</keyword>
<keyword id="KW-0227">DNA damage</keyword>
<keyword id="KW-0233">DNA recombination</keyword>
<keyword id="KW-0234">DNA repair</keyword>
<keyword id="KW-0539">Nucleus</keyword>
<keyword id="KW-0597">Phosphoprotein</keyword>
<keyword id="KW-1185">Reference proteome</keyword>
<name>KRE29_YEAST</name>
<accession>P40026</accession>
<accession>D3DLT7</accession>